<protein>
    <recommendedName>
        <fullName evidence="1">Protein ADP-ribosyltransferase PARP3</fullName>
        <ecNumber evidence="1">2.4.2.-</ecNumber>
    </recommendedName>
    <alternativeName>
        <fullName>NAD(+) ADP-ribosyltransferase 3</fullName>
        <shortName>ADPRT-3</shortName>
    </alternativeName>
    <alternativeName>
        <fullName>Poly[ADP-ribose] synthase 3</fullName>
    </alternativeName>
    <alternativeName>
        <fullName>Putative poly [ADP-ribose] polymerase 3</fullName>
        <shortName>PARP-3</shortName>
    </alternativeName>
</protein>
<organism>
    <name type="scientific">Medicago truncatula</name>
    <name type="common">Barrel medic</name>
    <name type="synonym">Medicago tribuloides</name>
    <dbReference type="NCBI Taxonomy" id="3880"/>
    <lineage>
        <taxon>Eukaryota</taxon>
        <taxon>Viridiplantae</taxon>
        <taxon>Streptophyta</taxon>
        <taxon>Embryophyta</taxon>
        <taxon>Tracheophyta</taxon>
        <taxon>Spermatophyta</taxon>
        <taxon>Magnoliopsida</taxon>
        <taxon>eudicotyledons</taxon>
        <taxon>Gunneridae</taxon>
        <taxon>Pentapetalae</taxon>
        <taxon>rosids</taxon>
        <taxon>fabids</taxon>
        <taxon>Fabales</taxon>
        <taxon>Fabaceae</taxon>
        <taxon>Papilionoideae</taxon>
        <taxon>50 kb inversion clade</taxon>
        <taxon>NPAAA clade</taxon>
        <taxon>Hologalegina</taxon>
        <taxon>IRL clade</taxon>
        <taxon>Trifolieae</taxon>
        <taxon>Medicago</taxon>
    </lineage>
</organism>
<evidence type="ECO:0000250" key="1">
    <source>
        <dbReference type="UniProtKB" id="Q9Y6F1"/>
    </source>
</evidence>
<evidence type="ECO:0000255" key="2">
    <source>
        <dbReference type="PROSITE-ProRule" id="PRU00033"/>
    </source>
</evidence>
<evidence type="ECO:0000255" key="3">
    <source>
        <dbReference type="PROSITE-ProRule" id="PRU00397"/>
    </source>
</evidence>
<evidence type="ECO:0000255" key="4">
    <source>
        <dbReference type="PROSITE-ProRule" id="PRU00398"/>
    </source>
</evidence>
<evidence type="ECO:0000255" key="5">
    <source>
        <dbReference type="PROSITE-ProRule" id="PRU01321"/>
    </source>
</evidence>
<evidence type="ECO:0000255" key="6">
    <source>
        <dbReference type="PROSITE-ProRule" id="PRU01351"/>
    </source>
</evidence>
<evidence type="ECO:0000256" key="7">
    <source>
        <dbReference type="SAM" id="MobiDB-lite"/>
    </source>
</evidence>
<evidence type="ECO:0000305" key="8"/>
<accession>Q1SGF1</accession>
<reference key="1">
    <citation type="submission" date="2006-04" db="EMBL/GenBank/DDBJ databases">
        <authorList>
            <consortium name="The International Medicago Genome Annotation Group"/>
        </authorList>
    </citation>
    <scope>NUCLEOTIDE SEQUENCE [LARGE SCALE GENOMIC DNA]</scope>
</reference>
<proteinExistence type="inferred from homology"/>
<dbReference type="EC" id="2.4.2.-" evidence="1"/>
<dbReference type="EMBL" id="AC144515">
    <property type="status" value="NOT_ANNOTATED_CDS"/>
    <property type="molecule type" value="Genomic_DNA"/>
</dbReference>
<dbReference type="SMR" id="Q1SGF1"/>
<dbReference type="PaxDb" id="3880-AES88336"/>
<dbReference type="eggNOG" id="KOG1037">
    <property type="taxonomic scope" value="Eukaryota"/>
</dbReference>
<dbReference type="ExpressionAtlas" id="Q1SGF1">
    <property type="expression patterns" value="differential"/>
</dbReference>
<dbReference type="GO" id="GO:0005634">
    <property type="term" value="C:nucleus"/>
    <property type="evidence" value="ECO:0007669"/>
    <property type="project" value="UniProtKB-SubCell"/>
</dbReference>
<dbReference type="GO" id="GO:0003677">
    <property type="term" value="F:DNA binding"/>
    <property type="evidence" value="ECO:0007669"/>
    <property type="project" value="UniProtKB-KW"/>
</dbReference>
<dbReference type="GO" id="GO:0003950">
    <property type="term" value="F:NAD+ poly-ADP-ribosyltransferase activity"/>
    <property type="evidence" value="ECO:0007669"/>
    <property type="project" value="InterPro"/>
</dbReference>
<dbReference type="GO" id="GO:0140806">
    <property type="term" value="F:NAD+-protein-aspartate ADP-ribosyltransferase activity"/>
    <property type="evidence" value="ECO:0007669"/>
    <property type="project" value="RHEA"/>
</dbReference>
<dbReference type="GO" id="GO:0140807">
    <property type="term" value="F:NAD+-protein-glutamate ADP-ribosyltransferase activity"/>
    <property type="evidence" value="ECO:0007669"/>
    <property type="project" value="RHEA"/>
</dbReference>
<dbReference type="GO" id="GO:0016779">
    <property type="term" value="F:nucleotidyltransferase activity"/>
    <property type="evidence" value="ECO:0007669"/>
    <property type="project" value="UniProtKB-KW"/>
</dbReference>
<dbReference type="GO" id="GO:0008270">
    <property type="term" value="F:zinc ion binding"/>
    <property type="evidence" value="ECO:0007669"/>
    <property type="project" value="UniProtKB-KW"/>
</dbReference>
<dbReference type="CDD" id="cd01437">
    <property type="entry name" value="parp_like"/>
    <property type="match status" value="1"/>
</dbReference>
<dbReference type="CDD" id="cd08001">
    <property type="entry name" value="WGR_PARP1_like"/>
    <property type="match status" value="1"/>
</dbReference>
<dbReference type="FunFam" id="1.20.142.10:FF:000004">
    <property type="entry name" value="Poly [ADP-ribose] polymerase"/>
    <property type="match status" value="1"/>
</dbReference>
<dbReference type="FunFam" id="3.90.228.10:FF:000010">
    <property type="entry name" value="Poly [ADP-ribose] polymerase"/>
    <property type="match status" value="1"/>
</dbReference>
<dbReference type="Gene3D" id="1.10.20.130">
    <property type="match status" value="1"/>
</dbReference>
<dbReference type="Gene3D" id="2.20.25.630">
    <property type="match status" value="1"/>
</dbReference>
<dbReference type="Gene3D" id="3.90.228.10">
    <property type="match status" value="1"/>
</dbReference>
<dbReference type="Gene3D" id="3.40.50.10190">
    <property type="entry name" value="BRCT domain"/>
    <property type="match status" value="1"/>
</dbReference>
<dbReference type="Gene3D" id="1.20.142.10">
    <property type="entry name" value="Poly(ADP-ribose) polymerase, regulatory domain"/>
    <property type="match status" value="1"/>
</dbReference>
<dbReference type="InterPro" id="IPR050800">
    <property type="entry name" value="ARTD/PARP"/>
</dbReference>
<dbReference type="InterPro" id="IPR001357">
    <property type="entry name" value="BRCT_dom"/>
</dbReference>
<dbReference type="InterPro" id="IPR036420">
    <property type="entry name" value="BRCT_dom_sf"/>
</dbReference>
<dbReference type="InterPro" id="IPR038650">
    <property type="entry name" value="PADR1_C_dom_sf"/>
</dbReference>
<dbReference type="InterPro" id="IPR049296">
    <property type="entry name" value="PARP1-like_PADR1_N"/>
</dbReference>
<dbReference type="InterPro" id="IPR012982">
    <property type="entry name" value="PARP1-like_PADR1_Zn_ribbon"/>
</dbReference>
<dbReference type="InterPro" id="IPR012317">
    <property type="entry name" value="Poly(ADP-ribose)pol_cat_dom"/>
</dbReference>
<dbReference type="InterPro" id="IPR004102">
    <property type="entry name" value="Poly(ADP-ribose)pol_reg_dom"/>
</dbReference>
<dbReference type="InterPro" id="IPR036616">
    <property type="entry name" value="Poly(ADP-ribose)pol_reg_dom_sf"/>
</dbReference>
<dbReference type="InterPro" id="IPR036930">
    <property type="entry name" value="WGR_dom_sf"/>
</dbReference>
<dbReference type="InterPro" id="IPR008893">
    <property type="entry name" value="WGR_domain"/>
</dbReference>
<dbReference type="PANTHER" id="PTHR10459">
    <property type="entry name" value="DNA LIGASE"/>
    <property type="match status" value="1"/>
</dbReference>
<dbReference type="PANTHER" id="PTHR10459:SF106">
    <property type="entry name" value="PROTEIN ADP-RIBOSYLTRANSFERASE PARP3"/>
    <property type="match status" value="1"/>
</dbReference>
<dbReference type="Pfam" id="PF21728">
    <property type="entry name" value="PADR1_N"/>
    <property type="match status" value="1"/>
</dbReference>
<dbReference type="Pfam" id="PF00644">
    <property type="entry name" value="PARP"/>
    <property type="match status" value="1"/>
</dbReference>
<dbReference type="Pfam" id="PF02877">
    <property type="entry name" value="PARP_reg"/>
    <property type="match status" value="1"/>
</dbReference>
<dbReference type="Pfam" id="PF05406">
    <property type="entry name" value="WGR"/>
    <property type="match status" value="1"/>
</dbReference>
<dbReference type="Pfam" id="PF08063">
    <property type="entry name" value="Zn_ribbon_PADR1"/>
    <property type="match status" value="1"/>
</dbReference>
<dbReference type="SMART" id="SM01335">
    <property type="entry name" value="PADR1"/>
    <property type="match status" value="1"/>
</dbReference>
<dbReference type="SMART" id="SM00773">
    <property type="entry name" value="WGR"/>
    <property type="match status" value="1"/>
</dbReference>
<dbReference type="SUPFAM" id="SSF56399">
    <property type="entry name" value="ADP-ribosylation"/>
    <property type="match status" value="1"/>
</dbReference>
<dbReference type="SUPFAM" id="SSF52113">
    <property type="entry name" value="BRCT domain"/>
    <property type="match status" value="1"/>
</dbReference>
<dbReference type="SUPFAM" id="SSF47587">
    <property type="entry name" value="Domain of poly(ADP-ribose) polymerase"/>
    <property type="match status" value="1"/>
</dbReference>
<dbReference type="SUPFAM" id="SSF142921">
    <property type="entry name" value="WGR domain-like"/>
    <property type="match status" value="1"/>
</dbReference>
<dbReference type="PROSITE" id="PS50172">
    <property type="entry name" value="BRCT"/>
    <property type="match status" value="1"/>
</dbReference>
<dbReference type="PROSITE" id="PS52007">
    <property type="entry name" value="PADR1"/>
    <property type="match status" value="1"/>
</dbReference>
<dbReference type="PROSITE" id="PS51060">
    <property type="entry name" value="PARP_ALPHA_HD"/>
    <property type="match status" value="1"/>
</dbReference>
<dbReference type="PROSITE" id="PS51059">
    <property type="entry name" value="PARP_CATALYTIC"/>
    <property type="match status" value="1"/>
</dbReference>
<dbReference type="PROSITE" id="PS51977">
    <property type="entry name" value="WGR"/>
    <property type="match status" value="1"/>
</dbReference>
<comment type="function">
    <text evidence="1">Involved in the base excision repair (BER) pathway, by catalyzing the poly(ADP-ribosyl)ation of a limited number of acceptor proteins involved in chromatin architecture and in DNA metabolism. This modification follows DNA damages and appears as an obligatory step in a detection/signaling pathway leading to the reparation of DNA strand breaks (By similarity).</text>
</comment>
<comment type="catalytic activity">
    <reaction evidence="1">
        <text>L-aspartyl-[protein] + NAD(+) = 4-O-(ADP-D-ribosyl)-L-aspartyl-[protein] + nicotinamide</text>
        <dbReference type="Rhea" id="RHEA:54424"/>
        <dbReference type="Rhea" id="RHEA-COMP:9867"/>
        <dbReference type="Rhea" id="RHEA-COMP:13832"/>
        <dbReference type="ChEBI" id="CHEBI:17154"/>
        <dbReference type="ChEBI" id="CHEBI:29961"/>
        <dbReference type="ChEBI" id="CHEBI:57540"/>
        <dbReference type="ChEBI" id="CHEBI:138102"/>
    </reaction>
</comment>
<comment type="catalytic activity">
    <reaction evidence="1">
        <text>L-glutamyl-[protein] + NAD(+) = 5-O-(ADP-D-ribosyl)-L-glutamyl-[protein] + nicotinamide</text>
        <dbReference type="Rhea" id="RHEA:58224"/>
        <dbReference type="Rhea" id="RHEA-COMP:10208"/>
        <dbReference type="Rhea" id="RHEA-COMP:15089"/>
        <dbReference type="ChEBI" id="CHEBI:17154"/>
        <dbReference type="ChEBI" id="CHEBI:29973"/>
        <dbReference type="ChEBI" id="CHEBI:57540"/>
        <dbReference type="ChEBI" id="CHEBI:142540"/>
    </reaction>
</comment>
<comment type="subcellular location">
    <subcellularLocation>
        <location evidence="8">Nucleus</location>
    </subcellularLocation>
</comment>
<comment type="similarity">
    <text evidence="6 8">Belongs to the ARTD/PARP family.</text>
</comment>
<name>PARP3_MEDTR</name>
<feature type="chain" id="PRO_0000260501" description="Protein ADP-ribosyltransferase PARP3">
    <location>
        <begin position="1"/>
        <end position="799"/>
    </location>
</feature>
<feature type="domain" description="PADR1 zinc-binding" evidence="6">
    <location>
        <begin position="39"/>
        <end position="188"/>
    </location>
</feature>
<feature type="domain" description="SAP">
    <location>
        <begin position="71"/>
        <end position="105"/>
    </location>
</feature>
<feature type="domain" description="BRCT" evidence="2">
    <location>
        <begin position="189"/>
        <end position="261"/>
    </location>
</feature>
<feature type="domain" description="WGR" evidence="5">
    <location>
        <begin position="309"/>
        <end position="409"/>
    </location>
</feature>
<feature type="domain" description="PARP alpha-helical" evidence="4">
    <location>
        <begin position="436"/>
        <end position="555"/>
    </location>
</feature>
<feature type="domain" description="PARP catalytic" evidence="3">
    <location>
        <begin position="564"/>
        <end position="795"/>
    </location>
</feature>
<feature type="region of interest" description="Disordered" evidence="7">
    <location>
        <begin position="1"/>
        <end position="55"/>
    </location>
</feature>
<feature type="region of interest" description="Zinc ribbon" evidence="6">
    <location>
        <begin position="108"/>
        <end position="152"/>
    </location>
</feature>
<feature type="region of interest" description="Disordered" evidence="7">
    <location>
        <begin position="140"/>
        <end position="161"/>
    </location>
</feature>
<feature type="compositionally biased region" description="Basic and acidic residues" evidence="7">
    <location>
        <begin position="1"/>
        <end position="49"/>
    </location>
</feature>
<feature type="compositionally biased region" description="Basic and acidic residues" evidence="7">
    <location>
        <begin position="145"/>
        <end position="154"/>
    </location>
</feature>
<feature type="binding site" evidence="6">
    <location>
        <position position="113"/>
    </location>
    <ligand>
        <name>Zn(2+)</name>
        <dbReference type="ChEBI" id="CHEBI:29105"/>
    </ligand>
</feature>
<feature type="binding site" evidence="6">
    <location>
        <position position="116"/>
    </location>
    <ligand>
        <name>Zn(2+)</name>
        <dbReference type="ChEBI" id="CHEBI:29105"/>
    </ligand>
</feature>
<feature type="binding site" evidence="6">
    <location>
        <position position="129"/>
    </location>
    <ligand>
        <name>Zn(2+)</name>
        <dbReference type="ChEBI" id="CHEBI:29105"/>
    </ligand>
</feature>
<feature type="binding site" evidence="6">
    <location>
        <position position="139"/>
    </location>
    <ligand>
        <name>Zn(2+)</name>
        <dbReference type="ChEBI" id="CHEBI:29105"/>
    </ligand>
</feature>
<keyword id="KW-0013">ADP-ribosylation</keyword>
<keyword id="KW-0238">DNA-binding</keyword>
<keyword id="KW-0328">Glycosyltransferase</keyword>
<keyword id="KW-0479">Metal-binding</keyword>
<keyword id="KW-0520">NAD</keyword>
<keyword id="KW-0548">Nucleotidyltransferase</keyword>
<keyword id="KW-0539">Nucleus</keyword>
<keyword id="KW-0808">Transferase</keyword>
<keyword id="KW-0862">Zinc</keyword>
<keyword id="KW-0863">Zinc-finger</keyword>
<gene>
    <name type="primary">PARP3</name>
</gene>
<sequence length="799" mass="89991">MKVESRSHNVHHAHGEEEKVMTRKQKAESKAHEVEHSPKKAKVEDEKNGHTNGKSASDVVQEYDEFCKATNEQLSLEQMKEILEANDLDSSGSDLEITRRCQDLLFFGALEKCMVCNGNMEFDGRRYGCRGFYSEWSSCTFSTREPPRKDEPIKLPDSVQNSPVSDLLKKYQDPSKRPQRDLGLAIKPFTGMMISLMGRLNRTHLNFSGASCLVASPAERDRGGTSKLADAMERGIPVVREAWLTDSIEKQEPQPLESYDLVSDLSVDGKGIPWDKQDPGEEAIESLSAELKLYGKRGVYKDTKLHEQDGKIFEKDGILYNCAFSLCDQGRKLNDYCVMQLIVVPENSLHLYFKKGRVGDDPSAEERLEECENVDNAIKEFVRLFEEITGNEFESWEREKKFQKKPLKFYPIDMDDGVEVRHGALGLRQLGIAATHCKLEPMVANFMKVLCSQEIYKYALMEMGYDSPDLPIGMVTNLHLKRCEEILLEFIEKVKTLKETGPKADAIWSDFSQKWFTLMHSTRPFIFRDYQEIADHAAAALEGVRDITLASHLIGDMSGSTIDDPLSDTYKKLGCSITPLEKNSNDYEMIVKYLEKTYEPVKVGDIEYGVSVENIFTVESSACPSYADIVKMPNKVLLWCGSRSSNLLRHLHKGFLPAICSLPVPGYMFGKAIVCSDAAAEAARYGFTAVDRPEGFLVLAIASLGNEITELKSPPEDTTSLEEKKVGVKGLGKKKTDESEHFVWKDDIKVPCGSIIASEHEDSPLEYNEYAVYDPKQVRISYLVGVKYEEKDAVIDTAE</sequence>